<evidence type="ECO:0000255" key="1">
    <source>
        <dbReference type="HAMAP-Rule" id="MF_01588"/>
    </source>
</evidence>
<dbReference type="EC" id="6.5.1.2" evidence="1"/>
<dbReference type="EMBL" id="CP000724">
    <property type="protein sequence ID" value="ABR47162.1"/>
    <property type="molecule type" value="Genomic_DNA"/>
</dbReference>
<dbReference type="RefSeq" id="WP_012062204.1">
    <property type="nucleotide sequence ID" value="NC_009633.1"/>
</dbReference>
<dbReference type="SMR" id="A6TLU4"/>
<dbReference type="STRING" id="293826.Amet_0942"/>
<dbReference type="KEGG" id="amt:Amet_0942"/>
<dbReference type="eggNOG" id="COG0272">
    <property type="taxonomic scope" value="Bacteria"/>
</dbReference>
<dbReference type="HOGENOM" id="CLU_007764_2_1_9"/>
<dbReference type="OrthoDB" id="9759736at2"/>
<dbReference type="Proteomes" id="UP000001572">
    <property type="component" value="Chromosome"/>
</dbReference>
<dbReference type="GO" id="GO:0005829">
    <property type="term" value="C:cytosol"/>
    <property type="evidence" value="ECO:0007669"/>
    <property type="project" value="TreeGrafter"/>
</dbReference>
<dbReference type="GO" id="GO:0003677">
    <property type="term" value="F:DNA binding"/>
    <property type="evidence" value="ECO:0007669"/>
    <property type="project" value="InterPro"/>
</dbReference>
<dbReference type="GO" id="GO:0003911">
    <property type="term" value="F:DNA ligase (NAD+) activity"/>
    <property type="evidence" value="ECO:0007669"/>
    <property type="project" value="UniProtKB-UniRule"/>
</dbReference>
<dbReference type="GO" id="GO:0046872">
    <property type="term" value="F:metal ion binding"/>
    <property type="evidence" value="ECO:0007669"/>
    <property type="project" value="UniProtKB-KW"/>
</dbReference>
<dbReference type="GO" id="GO:0006281">
    <property type="term" value="P:DNA repair"/>
    <property type="evidence" value="ECO:0007669"/>
    <property type="project" value="UniProtKB-KW"/>
</dbReference>
<dbReference type="GO" id="GO:0006260">
    <property type="term" value="P:DNA replication"/>
    <property type="evidence" value="ECO:0007669"/>
    <property type="project" value="UniProtKB-KW"/>
</dbReference>
<dbReference type="CDD" id="cd17748">
    <property type="entry name" value="BRCT_DNA_ligase_like"/>
    <property type="match status" value="1"/>
</dbReference>
<dbReference type="CDD" id="cd00114">
    <property type="entry name" value="LIGANc"/>
    <property type="match status" value="1"/>
</dbReference>
<dbReference type="FunFam" id="1.10.150.20:FF:000006">
    <property type="entry name" value="DNA ligase"/>
    <property type="match status" value="1"/>
</dbReference>
<dbReference type="FunFam" id="1.10.150.20:FF:000007">
    <property type="entry name" value="DNA ligase"/>
    <property type="match status" value="1"/>
</dbReference>
<dbReference type="FunFam" id="2.40.50.140:FF:000012">
    <property type="entry name" value="DNA ligase"/>
    <property type="match status" value="1"/>
</dbReference>
<dbReference type="Gene3D" id="1.10.150.20">
    <property type="entry name" value="5' to 3' exonuclease, C-terminal subdomain"/>
    <property type="match status" value="2"/>
</dbReference>
<dbReference type="Gene3D" id="3.40.50.10190">
    <property type="entry name" value="BRCT domain"/>
    <property type="match status" value="1"/>
</dbReference>
<dbReference type="Gene3D" id="3.30.470.30">
    <property type="entry name" value="DNA ligase/mRNA capping enzyme"/>
    <property type="match status" value="1"/>
</dbReference>
<dbReference type="Gene3D" id="1.10.287.610">
    <property type="entry name" value="Helix hairpin bin"/>
    <property type="match status" value="1"/>
</dbReference>
<dbReference type="Gene3D" id="2.40.50.140">
    <property type="entry name" value="Nucleic acid-binding proteins"/>
    <property type="match status" value="1"/>
</dbReference>
<dbReference type="HAMAP" id="MF_01588">
    <property type="entry name" value="DNA_ligase_A"/>
    <property type="match status" value="1"/>
</dbReference>
<dbReference type="InterPro" id="IPR001357">
    <property type="entry name" value="BRCT_dom"/>
</dbReference>
<dbReference type="InterPro" id="IPR036420">
    <property type="entry name" value="BRCT_dom_sf"/>
</dbReference>
<dbReference type="InterPro" id="IPR041663">
    <property type="entry name" value="DisA/LigA_HHH"/>
</dbReference>
<dbReference type="InterPro" id="IPR001679">
    <property type="entry name" value="DNA_ligase"/>
</dbReference>
<dbReference type="InterPro" id="IPR013839">
    <property type="entry name" value="DNAligase_adenylation"/>
</dbReference>
<dbReference type="InterPro" id="IPR013840">
    <property type="entry name" value="DNAligase_N"/>
</dbReference>
<dbReference type="InterPro" id="IPR003583">
    <property type="entry name" value="Hlx-hairpin-Hlx_DNA-bd_motif"/>
</dbReference>
<dbReference type="InterPro" id="IPR012340">
    <property type="entry name" value="NA-bd_OB-fold"/>
</dbReference>
<dbReference type="InterPro" id="IPR004150">
    <property type="entry name" value="NAD_DNA_ligase_OB"/>
</dbReference>
<dbReference type="InterPro" id="IPR010994">
    <property type="entry name" value="RuvA_2-like"/>
</dbReference>
<dbReference type="NCBIfam" id="TIGR00575">
    <property type="entry name" value="dnlj"/>
    <property type="match status" value="1"/>
</dbReference>
<dbReference type="NCBIfam" id="NF005932">
    <property type="entry name" value="PRK07956.1"/>
    <property type="match status" value="1"/>
</dbReference>
<dbReference type="PANTHER" id="PTHR23389">
    <property type="entry name" value="CHROMOSOME TRANSMISSION FIDELITY FACTOR 18"/>
    <property type="match status" value="1"/>
</dbReference>
<dbReference type="PANTHER" id="PTHR23389:SF9">
    <property type="entry name" value="DNA LIGASE"/>
    <property type="match status" value="1"/>
</dbReference>
<dbReference type="Pfam" id="PF00533">
    <property type="entry name" value="BRCT"/>
    <property type="match status" value="1"/>
</dbReference>
<dbReference type="Pfam" id="PF01653">
    <property type="entry name" value="DNA_ligase_aden"/>
    <property type="match status" value="1"/>
</dbReference>
<dbReference type="Pfam" id="PF03120">
    <property type="entry name" value="DNA_ligase_OB"/>
    <property type="match status" value="1"/>
</dbReference>
<dbReference type="Pfam" id="PF12826">
    <property type="entry name" value="HHH_2"/>
    <property type="match status" value="1"/>
</dbReference>
<dbReference type="Pfam" id="PF14520">
    <property type="entry name" value="HHH_5"/>
    <property type="match status" value="1"/>
</dbReference>
<dbReference type="Pfam" id="PF22745">
    <property type="entry name" value="Nlig-Ia"/>
    <property type="match status" value="1"/>
</dbReference>
<dbReference type="PIRSF" id="PIRSF001604">
    <property type="entry name" value="LigA"/>
    <property type="match status" value="1"/>
</dbReference>
<dbReference type="SMART" id="SM00292">
    <property type="entry name" value="BRCT"/>
    <property type="match status" value="1"/>
</dbReference>
<dbReference type="SMART" id="SM00278">
    <property type="entry name" value="HhH1"/>
    <property type="match status" value="4"/>
</dbReference>
<dbReference type="SMART" id="SM00532">
    <property type="entry name" value="LIGANc"/>
    <property type="match status" value="1"/>
</dbReference>
<dbReference type="SUPFAM" id="SSF52113">
    <property type="entry name" value="BRCT domain"/>
    <property type="match status" value="1"/>
</dbReference>
<dbReference type="SUPFAM" id="SSF56091">
    <property type="entry name" value="DNA ligase/mRNA capping enzyme, catalytic domain"/>
    <property type="match status" value="1"/>
</dbReference>
<dbReference type="SUPFAM" id="SSF50249">
    <property type="entry name" value="Nucleic acid-binding proteins"/>
    <property type="match status" value="1"/>
</dbReference>
<dbReference type="SUPFAM" id="SSF47781">
    <property type="entry name" value="RuvA domain 2-like"/>
    <property type="match status" value="1"/>
</dbReference>
<dbReference type="PROSITE" id="PS50172">
    <property type="entry name" value="BRCT"/>
    <property type="match status" value="1"/>
</dbReference>
<feature type="chain" id="PRO_0000340324" description="DNA ligase">
    <location>
        <begin position="1"/>
        <end position="660"/>
    </location>
</feature>
<feature type="domain" description="BRCT" evidence="1">
    <location>
        <begin position="577"/>
        <end position="660"/>
    </location>
</feature>
<feature type="active site" description="N6-AMP-lysine intermediate" evidence="1">
    <location>
        <position position="113"/>
    </location>
</feature>
<feature type="binding site" evidence="1">
    <location>
        <begin position="31"/>
        <end position="35"/>
    </location>
    <ligand>
        <name>NAD(+)</name>
        <dbReference type="ChEBI" id="CHEBI:57540"/>
    </ligand>
</feature>
<feature type="binding site" evidence="1">
    <location>
        <begin position="79"/>
        <end position="80"/>
    </location>
    <ligand>
        <name>NAD(+)</name>
        <dbReference type="ChEBI" id="CHEBI:57540"/>
    </ligand>
</feature>
<feature type="binding site" evidence="1">
    <location>
        <position position="111"/>
    </location>
    <ligand>
        <name>NAD(+)</name>
        <dbReference type="ChEBI" id="CHEBI:57540"/>
    </ligand>
</feature>
<feature type="binding site" evidence="1">
    <location>
        <position position="134"/>
    </location>
    <ligand>
        <name>NAD(+)</name>
        <dbReference type="ChEBI" id="CHEBI:57540"/>
    </ligand>
</feature>
<feature type="binding site" evidence="1">
    <location>
        <position position="168"/>
    </location>
    <ligand>
        <name>NAD(+)</name>
        <dbReference type="ChEBI" id="CHEBI:57540"/>
    </ligand>
</feature>
<feature type="binding site" evidence="1">
    <location>
        <position position="280"/>
    </location>
    <ligand>
        <name>NAD(+)</name>
        <dbReference type="ChEBI" id="CHEBI:57540"/>
    </ligand>
</feature>
<feature type="binding site" evidence="1">
    <location>
        <position position="304"/>
    </location>
    <ligand>
        <name>NAD(+)</name>
        <dbReference type="ChEBI" id="CHEBI:57540"/>
    </ligand>
</feature>
<feature type="binding site" evidence="1">
    <location>
        <position position="397"/>
    </location>
    <ligand>
        <name>Zn(2+)</name>
        <dbReference type="ChEBI" id="CHEBI:29105"/>
    </ligand>
</feature>
<feature type="binding site" evidence="1">
    <location>
        <position position="400"/>
    </location>
    <ligand>
        <name>Zn(2+)</name>
        <dbReference type="ChEBI" id="CHEBI:29105"/>
    </ligand>
</feature>
<feature type="binding site" evidence="1">
    <location>
        <position position="413"/>
    </location>
    <ligand>
        <name>Zn(2+)</name>
        <dbReference type="ChEBI" id="CHEBI:29105"/>
    </ligand>
</feature>
<feature type="binding site" evidence="1">
    <location>
        <position position="419"/>
    </location>
    <ligand>
        <name>Zn(2+)</name>
        <dbReference type="ChEBI" id="CHEBI:29105"/>
    </ligand>
</feature>
<sequence>MDQMKEMEQLVKQLNEYSYKYYVLDQPIVSDKEYDSLYDQLIELEEKTGHVLLDSPTQRVGGEPLKKFQSHQHVALLWSLDKAKTAEELVAWEQRIKKKLESNHEIEYIVEYKFDGLTLNLTYENGELVQAATRGNGVVGESIIEQVKTIQAIPLGVDFNNKMEIQGEGLMAISTLAQYNKTAKEPLKNPRNAAAGALRNLDPKVTAKRKLGAFCYSIGYYEGMEFETHIQMIDFLKKNRFPVSNYIKSCKGIDQVIEQIREVEAGMKELDYLTDGIVIKVNDLRTREILGYTQKFPRWAIAYKFEAQEVTTKLEAVLWQVGRTGKLTPAAQLEPVEIAGVTVSRATLNNWEDIQRKKVKVGCQVWLRRSGDVIPEIMGAIEETCEEAVEIEKPQHCPACDSEIVHRGVHIFCPNSLSCKPQLVSRIVHYASRDAMDIEGFSEKTAEQLFEALGLKNIAALYELKYEDLIQLERFGDKKAKNLLDAIEESKTCKLDAFIYALGIPNVGRKTAADLANYFGDLEKIQRANYDELVVLPDIGGIVAQSIVGFFEDEKIIKSIELLLAEGIKPQHKMKNRQESIFSGKTVVVTGTLENYGRKEIQTLLEEQGAKVSGSISKNTDFVIAGDNAGSKLKKAQEILESGVETNLQILDEAAFEALL</sequence>
<keyword id="KW-0227">DNA damage</keyword>
<keyword id="KW-0234">DNA repair</keyword>
<keyword id="KW-0235">DNA replication</keyword>
<keyword id="KW-0436">Ligase</keyword>
<keyword id="KW-0460">Magnesium</keyword>
<keyword id="KW-0464">Manganese</keyword>
<keyword id="KW-0479">Metal-binding</keyword>
<keyword id="KW-0520">NAD</keyword>
<keyword id="KW-1185">Reference proteome</keyword>
<keyword id="KW-0862">Zinc</keyword>
<name>DNLJ_ALKMQ</name>
<reference key="1">
    <citation type="journal article" date="2016" name="Genome Announc.">
        <title>Complete genome sequence of Alkaliphilus metalliredigens strain QYMF, an alkaliphilic and metal-reducing bacterium isolated from borax-contaminated leachate ponds.</title>
        <authorList>
            <person name="Hwang C."/>
            <person name="Copeland A."/>
            <person name="Lucas S."/>
            <person name="Lapidus A."/>
            <person name="Barry K."/>
            <person name="Detter J.C."/>
            <person name="Glavina Del Rio T."/>
            <person name="Hammon N."/>
            <person name="Israni S."/>
            <person name="Dalin E."/>
            <person name="Tice H."/>
            <person name="Pitluck S."/>
            <person name="Chertkov O."/>
            <person name="Brettin T."/>
            <person name="Bruce D."/>
            <person name="Han C."/>
            <person name="Schmutz J."/>
            <person name="Larimer F."/>
            <person name="Land M.L."/>
            <person name="Hauser L."/>
            <person name="Kyrpides N."/>
            <person name="Mikhailova N."/>
            <person name="Ye Q."/>
            <person name="Zhou J."/>
            <person name="Richardson P."/>
            <person name="Fields M.W."/>
        </authorList>
    </citation>
    <scope>NUCLEOTIDE SEQUENCE [LARGE SCALE GENOMIC DNA]</scope>
    <source>
        <strain>QYMF</strain>
    </source>
</reference>
<gene>
    <name evidence="1" type="primary">ligA</name>
    <name type="ordered locus">Amet_0942</name>
</gene>
<proteinExistence type="inferred from homology"/>
<comment type="function">
    <text evidence="1">DNA ligase that catalyzes the formation of phosphodiester linkages between 5'-phosphoryl and 3'-hydroxyl groups in double-stranded DNA using NAD as a coenzyme and as the energy source for the reaction. It is essential for DNA replication and repair of damaged DNA.</text>
</comment>
<comment type="catalytic activity">
    <reaction evidence="1">
        <text>NAD(+) + (deoxyribonucleotide)n-3'-hydroxyl + 5'-phospho-(deoxyribonucleotide)m = (deoxyribonucleotide)n+m + AMP + beta-nicotinamide D-nucleotide.</text>
        <dbReference type="EC" id="6.5.1.2"/>
    </reaction>
</comment>
<comment type="cofactor">
    <cofactor evidence="1">
        <name>Mg(2+)</name>
        <dbReference type="ChEBI" id="CHEBI:18420"/>
    </cofactor>
    <cofactor evidence="1">
        <name>Mn(2+)</name>
        <dbReference type="ChEBI" id="CHEBI:29035"/>
    </cofactor>
</comment>
<comment type="similarity">
    <text evidence="1">Belongs to the NAD-dependent DNA ligase family. LigA subfamily.</text>
</comment>
<accession>A6TLU4</accession>
<protein>
    <recommendedName>
        <fullName evidence="1">DNA ligase</fullName>
        <ecNumber evidence="1">6.5.1.2</ecNumber>
    </recommendedName>
    <alternativeName>
        <fullName evidence="1">Polydeoxyribonucleotide synthase [NAD(+)]</fullName>
    </alternativeName>
</protein>
<organism>
    <name type="scientific">Alkaliphilus metalliredigens (strain QYMF)</name>
    <dbReference type="NCBI Taxonomy" id="293826"/>
    <lineage>
        <taxon>Bacteria</taxon>
        <taxon>Bacillati</taxon>
        <taxon>Bacillota</taxon>
        <taxon>Clostridia</taxon>
        <taxon>Peptostreptococcales</taxon>
        <taxon>Natronincolaceae</taxon>
        <taxon>Alkaliphilus</taxon>
    </lineage>
</organism>